<sequence length="146" mass="15946">MAGPLRAPLLLLAILAVALALSPAAGASPGRTPRLLGGPMDASVEEEGVRRALDFAVSEYNKASNDMYHSRALQVVRARKQIVAGVNYFLDVEMGRTTCTKNQPNLDNCPFHEQPHLKRKAFCSFQIYSVPWQGIMTLSKSTCQDA</sequence>
<name>CYTC_SAISC</name>
<comment type="function">
    <text>As an inhibitor of cysteine proteinases, this protein is thought to serve an important physiological role as a local regulator of this enzyme activity.</text>
</comment>
<comment type="subcellular location">
    <subcellularLocation>
        <location evidence="1">Secreted</location>
    </subcellularLocation>
</comment>
<comment type="similarity">
    <text evidence="3">Belongs to the cystatin family.</text>
</comment>
<evidence type="ECO:0000250" key="1"/>
<evidence type="ECO:0000250" key="2">
    <source>
        <dbReference type="UniProtKB" id="P01034"/>
    </source>
</evidence>
<evidence type="ECO:0000305" key="3"/>
<dbReference type="EMBL" id="U52028">
    <property type="protein sequence ID" value="AAB64051.1"/>
    <property type="molecule type" value="mRNA"/>
</dbReference>
<dbReference type="SMR" id="O19093"/>
<dbReference type="MEROPS" id="I25.004"/>
<dbReference type="GO" id="GO:0005737">
    <property type="term" value="C:cytoplasm"/>
    <property type="evidence" value="ECO:0007669"/>
    <property type="project" value="TreeGrafter"/>
</dbReference>
<dbReference type="GO" id="GO:0005615">
    <property type="term" value="C:extracellular space"/>
    <property type="evidence" value="ECO:0007669"/>
    <property type="project" value="TreeGrafter"/>
</dbReference>
<dbReference type="GO" id="GO:0031982">
    <property type="term" value="C:vesicle"/>
    <property type="evidence" value="ECO:0007669"/>
    <property type="project" value="TreeGrafter"/>
</dbReference>
<dbReference type="GO" id="GO:0004869">
    <property type="term" value="F:cysteine-type endopeptidase inhibitor activity"/>
    <property type="evidence" value="ECO:0007669"/>
    <property type="project" value="UniProtKB-KW"/>
</dbReference>
<dbReference type="CDD" id="cd00042">
    <property type="entry name" value="CY"/>
    <property type="match status" value="1"/>
</dbReference>
<dbReference type="FunFam" id="3.10.450.10:FF:000004">
    <property type="entry name" value="Cystatin C"/>
    <property type="match status" value="1"/>
</dbReference>
<dbReference type="Gene3D" id="3.10.450.10">
    <property type="match status" value="1"/>
</dbReference>
<dbReference type="InterPro" id="IPR000010">
    <property type="entry name" value="Cystatin_dom"/>
</dbReference>
<dbReference type="InterPro" id="IPR046350">
    <property type="entry name" value="Cystatin_sf"/>
</dbReference>
<dbReference type="InterPro" id="IPR018073">
    <property type="entry name" value="Prot_inh_cystat_CS"/>
</dbReference>
<dbReference type="PANTHER" id="PTHR46186">
    <property type="entry name" value="CYSTATIN"/>
    <property type="match status" value="1"/>
</dbReference>
<dbReference type="PANTHER" id="PTHR46186:SF10">
    <property type="entry name" value="CYSTATIN-C"/>
    <property type="match status" value="1"/>
</dbReference>
<dbReference type="Pfam" id="PF00031">
    <property type="entry name" value="Cystatin"/>
    <property type="match status" value="1"/>
</dbReference>
<dbReference type="SMART" id="SM00043">
    <property type="entry name" value="CY"/>
    <property type="match status" value="1"/>
</dbReference>
<dbReference type="SUPFAM" id="SSF54403">
    <property type="entry name" value="Cystatin/monellin"/>
    <property type="match status" value="1"/>
</dbReference>
<dbReference type="PROSITE" id="PS00287">
    <property type="entry name" value="CYSTATIN"/>
    <property type="match status" value="1"/>
</dbReference>
<accession>O19093</accession>
<keyword id="KW-0034">Amyloid</keyword>
<keyword id="KW-1015">Disulfide bond</keyword>
<keyword id="KW-0597">Phosphoprotein</keyword>
<keyword id="KW-0646">Protease inhibitor</keyword>
<keyword id="KW-0964">Secreted</keyword>
<keyword id="KW-0732">Signal</keyword>
<keyword id="KW-0789">Thiol protease inhibitor</keyword>
<gene>
    <name type="primary">CST3</name>
</gene>
<protein>
    <recommendedName>
        <fullName>Cystatin-C</fullName>
    </recommendedName>
    <alternativeName>
        <fullName>Cystatin-3</fullName>
    </alternativeName>
</protein>
<proteinExistence type="evidence at transcript level"/>
<organism>
    <name type="scientific">Saimiri sciureus</name>
    <name type="common">Common squirrel monkey</name>
    <dbReference type="NCBI Taxonomy" id="9521"/>
    <lineage>
        <taxon>Eukaryota</taxon>
        <taxon>Metazoa</taxon>
        <taxon>Chordata</taxon>
        <taxon>Craniata</taxon>
        <taxon>Vertebrata</taxon>
        <taxon>Euteleostomi</taxon>
        <taxon>Mammalia</taxon>
        <taxon>Eutheria</taxon>
        <taxon>Euarchontoglires</taxon>
        <taxon>Primates</taxon>
        <taxon>Haplorrhini</taxon>
        <taxon>Platyrrhini</taxon>
        <taxon>Cebidae</taxon>
        <taxon>Saimiriinae</taxon>
        <taxon>Saimiri</taxon>
    </lineage>
</organism>
<feature type="signal peptide" evidence="1">
    <location>
        <begin position="1"/>
        <end position="26"/>
    </location>
</feature>
<feature type="chain" id="PRO_0000006641" description="Cystatin-C">
    <location>
        <begin position="27"/>
        <end position="146"/>
    </location>
</feature>
<feature type="short sequence motif" description="Secondary area of contact">
    <location>
        <begin position="81"/>
        <end position="85"/>
    </location>
</feature>
<feature type="site" description="Reactive site">
    <location>
        <position position="37"/>
    </location>
</feature>
<feature type="modified residue" description="Phosphoserine" evidence="2">
    <location>
        <position position="43"/>
    </location>
</feature>
<feature type="disulfide bond" evidence="1">
    <location>
        <begin position="99"/>
        <end position="109"/>
    </location>
</feature>
<feature type="disulfide bond" evidence="1">
    <location>
        <begin position="123"/>
        <end position="143"/>
    </location>
</feature>
<reference key="1">
    <citation type="journal article" date="1996" name="Stroke">
        <title>Cystatin C. Icelandic-like mutation in an animal model of cerebrovascular beta-amyloidosis.</title>
        <authorList>
            <person name="Wei L.H."/>
            <person name="Walker L.C."/>
            <person name="Levy E."/>
        </authorList>
    </citation>
    <scope>NUCLEOTIDE SEQUENCE [MRNA]</scope>
</reference>